<evidence type="ECO:0000255" key="1">
    <source>
        <dbReference type="HAMAP-Rule" id="MF_00766"/>
    </source>
</evidence>
<reference key="1">
    <citation type="journal article" date="2002" name="Nature">
        <title>Genome sequence of the plant pathogen Ralstonia solanacearum.</title>
        <authorList>
            <person name="Salanoubat M."/>
            <person name="Genin S."/>
            <person name="Artiguenave F."/>
            <person name="Gouzy J."/>
            <person name="Mangenot S."/>
            <person name="Arlat M."/>
            <person name="Billault A."/>
            <person name="Brottier P."/>
            <person name="Camus J.-C."/>
            <person name="Cattolico L."/>
            <person name="Chandler M."/>
            <person name="Choisne N."/>
            <person name="Claudel-Renard C."/>
            <person name="Cunnac S."/>
            <person name="Demange N."/>
            <person name="Gaspin C."/>
            <person name="Lavie M."/>
            <person name="Moisan A."/>
            <person name="Robert C."/>
            <person name="Saurin W."/>
            <person name="Schiex T."/>
            <person name="Siguier P."/>
            <person name="Thebault P."/>
            <person name="Whalen M."/>
            <person name="Wincker P."/>
            <person name="Levy M."/>
            <person name="Weissenbach J."/>
            <person name="Boucher C.A."/>
        </authorList>
    </citation>
    <scope>NUCLEOTIDE SEQUENCE [LARGE SCALE GENOMIC DNA]</scope>
    <source>
        <strain>ATCC BAA-1114 / GMI1000</strain>
    </source>
</reference>
<feature type="chain" id="PRO_0000083140" description="Biosynthetic peptidoglycan transglycosylase">
    <location>
        <begin position="1"/>
        <end position="234"/>
    </location>
</feature>
<feature type="transmembrane region" description="Helical" evidence="1">
    <location>
        <begin position="8"/>
        <end position="28"/>
    </location>
</feature>
<accession>Q8XVQ4</accession>
<organism>
    <name type="scientific">Ralstonia nicotianae (strain ATCC BAA-1114 / GMI1000)</name>
    <name type="common">Ralstonia solanacearum</name>
    <dbReference type="NCBI Taxonomy" id="267608"/>
    <lineage>
        <taxon>Bacteria</taxon>
        <taxon>Pseudomonadati</taxon>
        <taxon>Pseudomonadota</taxon>
        <taxon>Betaproteobacteria</taxon>
        <taxon>Burkholderiales</taxon>
        <taxon>Burkholderiaceae</taxon>
        <taxon>Ralstonia</taxon>
        <taxon>Ralstonia solanacearum species complex</taxon>
    </lineage>
</organism>
<sequence length="234" mass="26280">MMRWLGYVIGCFAAGVVALNLYFFAAIASWQVFNPASSAFMRAERMRLCGANLVTCGIDHRWVPYDQISRNLKRAVIASEDADFVSHSGWEVDAMLDAWEKNKRRGHVVAGGSTITQQLAKNLFLSGERHYLRKGEELVITWMLEFWLDKERILEIYLNSVEWGEGVFGAEAAAQHYFKRPASQLTVGQAARLAAALPAPKCFDKKRYCANVHISFTRKATVIANRMGSATLPD</sequence>
<proteinExistence type="inferred from homology"/>
<dbReference type="EC" id="2.4.99.28" evidence="1"/>
<dbReference type="EMBL" id="AL646052">
    <property type="protein sequence ID" value="CAD16483.1"/>
    <property type="molecule type" value="Genomic_DNA"/>
</dbReference>
<dbReference type="RefSeq" id="WP_011002683.1">
    <property type="nucleotide sequence ID" value="NC_003295.1"/>
</dbReference>
<dbReference type="SMR" id="Q8XVQ4"/>
<dbReference type="STRING" id="267608.RSc2776"/>
<dbReference type="CAZy" id="GT51">
    <property type="family name" value="Glycosyltransferase Family 51"/>
</dbReference>
<dbReference type="EnsemblBacteria" id="CAD16483">
    <property type="protein sequence ID" value="CAD16483"/>
    <property type="gene ID" value="RSc2776"/>
</dbReference>
<dbReference type="KEGG" id="rso:RSc2776"/>
<dbReference type="eggNOG" id="COG0744">
    <property type="taxonomic scope" value="Bacteria"/>
</dbReference>
<dbReference type="HOGENOM" id="CLU_006354_1_0_4"/>
<dbReference type="UniPathway" id="UPA00219"/>
<dbReference type="Proteomes" id="UP000001436">
    <property type="component" value="Chromosome"/>
</dbReference>
<dbReference type="GO" id="GO:0009274">
    <property type="term" value="C:peptidoglycan-based cell wall"/>
    <property type="evidence" value="ECO:0007669"/>
    <property type="project" value="InterPro"/>
</dbReference>
<dbReference type="GO" id="GO:0005886">
    <property type="term" value="C:plasma membrane"/>
    <property type="evidence" value="ECO:0007669"/>
    <property type="project" value="UniProtKB-SubCell"/>
</dbReference>
<dbReference type="GO" id="GO:0016763">
    <property type="term" value="F:pentosyltransferase activity"/>
    <property type="evidence" value="ECO:0007669"/>
    <property type="project" value="InterPro"/>
</dbReference>
<dbReference type="GO" id="GO:0008955">
    <property type="term" value="F:peptidoglycan glycosyltransferase activity"/>
    <property type="evidence" value="ECO:0007669"/>
    <property type="project" value="UniProtKB-UniRule"/>
</dbReference>
<dbReference type="GO" id="GO:0071555">
    <property type="term" value="P:cell wall organization"/>
    <property type="evidence" value="ECO:0007669"/>
    <property type="project" value="UniProtKB-KW"/>
</dbReference>
<dbReference type="GO" id="GO:0009252">
    <property type="term" value="P:peptidoglycan biosynthetic process"/>
    <property type="evidence" value="ECO:0007669"/>
    <property type="project" value="UniProtKB-UniRule"/>
</dbReference>
<dbReference type="GO" id="GO:0008360">
    <property type="term" value="P:regulation of cell shape"/>
    <property type="evidence" value="ECO:0007669"/>
    <property type="project" value="UniProtKB-KW"/>
</dbReference>
<dbReference type="Gene3D" id="1.10.3810.10">
    <property type="entry name" value="Biosynthetic peptidoglycan transglycosylase-like"/>
    <property type="match status" value="1"/>
</dbReference>
<dbReference type="HAMAP" id="MF_00766">
    <property type="entry name" value="PGT_MtgA"/>
    <property type="match status" value="1"/>
</dbReference>
<dbReference type="InterPro" id="IPR001264">
    <property type="entry name" value="Glyco_trans_51"/>
</dbReference>
<dbReference type="InterPro" id="IPR023346">
    <property type="entry name" value="Lysozyme-like_dom_sf"/>
</dbReference>
<dbReference type="InterPro" id="IPR036950">
    <property type="entry name" value="PBP_transglycosylase"/>
</dbReference>
<dbReference type="InterPro" id="IPR011812">
    <property type="entry name" value="Pep_trsgly"/>
</dbReference>
<dbReference type="NCBIfam" id="TIGR02070">
    <property type="entry name" value="mono_pep_trsgly"/>
    <property type="match status" value="1"/>
</dbReference>
<dbReference type="PANTHER" id="PTHR30400:SF0">
    <property type="entry name" value="BIOSYNTHETIC PEPTIDOGLYCAN TRANSGLYCOSYLASE"/>
    <property type="match status" value="1"/>
</dbReference>
<dbReference type="PANTHER" id="PTHR30400">
    <property type="entry name" value="MONOFUNCTIONAL BIOSYNTHETIC PEPTIDOGLYCAN TRANSGLYCOSYLASE"/>
    <property type="match status" value="1"/>
</dbReference>
<dbReference type="Pfam" id="PF00912">
    <property type="entry name" value="Transgly"/>
    <property type="match status" value="1"/>
</dbReference>
<dbReference type="SUPFAM" id="SSF53955">
    <property type="entry name" value="Lysozyme-like"/>
    <property type="match status" value="1"/>
</dbReference>
<protein>
    <recommendedName>
        <fullName evidence="1">Biosynthetic peptidoglycan transglycosylase</fullName>
        <ecNumber evidence="1">2.4.99.28</ecNumber>
    </recommendedName>
    <alternativeName>
        <fullName evidence="1">Glycan polymerase</fullName>
    </alternativeName>
    <alternativeName>
        <fullName evidence="1">Peptidoglycan glycosyltransferase MtgA</fullName>
        <shortName evidence="1">PGT</shortName>
    </alternativeName>
</protein>
<name>MTGA_RALN1</name>
<keyword id="KW-0997">Cell inner membrane</keyword>
<keyword id="KW-1003">Cell membrane</keyword>
<keyword id="KW-0133">Cell shape</keyword>
<keyword id="KW-0961">Cell wall biogenesis/degradation</keyword>
<keyword id="KW-0328">Glycosyltransferase</keyword>
<keyword id="KW-0472">Membrane</keyword>
<keyword id="KW-0573">Peptidoglycan synthesis</keyword>
<keyword id="KW-1185">Reference proteome</keyword>
<keyword id="KW-0808">Transferase</keyword>
<keyword id="KW-0812">Transmembrane</keyword>
<keyword id="KW-1133">Transmembrane helix</keyword>
<gene>
    <name evidence="1" type="primary">mtgA</name>
    <name type="ordered locus">RSc2776</name>
    <name type="ORF">RS00071</name>
</gene>
<comment type="function">
    <text evidence="1">Peptidoglycan polymerase that catalyzes glycan chain elongation from lipid-linked precursors.</text>
</comment>
<comment type="catalytic activity">
    <reaction evidence="1">
        <text>[GlcNAc-(1-&gt;4)-Mur2Ac(oyl-L-Ala-gamma-D-Glu-L-Lys-D-Ala-D-Ala)](n)-di-trans,octa-cis-undecaprenyl diphosphate + beta-D-GlcNAc-(1-&gt;4)-Mur2Ac(oyl-L-Ala-gamma-D-Glu-L-Lys-D-Ala-D-Ala)-di-trans,octa-cis-undecaprenyl diphosphate = [GlcNAc-(1-&gt;4)-Mur2Ac(oyl-L-Ala-gamma-D-Glu-L-Lys-D-Ala-D-Ala)](n+1)-di-trans,octa-cis-undecaprenyl diphosphate + di-trans,octa-cis-undecaprenyl diphosphate + H(+)</text>
        <dbReference type="Rhea" id="RHEA:23708"/>
        <dbReference type="Rhea" id="RHEA-COMP:9602"/>
        <dbReference type="Rhea" id="RHEA-COMP:9603"/>
        <dbReference type="ChEBI" id="CHEBI:15378"/>
        <dbReference type="ChEBI" id="CHEBI:58405"/>
        <dbReference type="ChEBI" id="CHEBI:60033"/>
        <dbReference type="ChEBI" id="CHEBI:78435"/>
        <dbReference type="EC" id="2.4.99.28"/>
    </reaction>
</comment>
<comment type="pathway">
    <text evidence="1">Cell wall biogenesis; peptidoglycan biosynthesis.</text>
</comment>
<comment type="subcellular location">
    <subcellularLocation>
        <location evidence="1">Cell inner membrane</location>
        <topology evidence="1">Single-pass membrane protein</topology>
    </subcellularLocation>
</comment>
<comment type="similarity">
    <text evidence="1">Belongs to the glycosyltransferase 51 family.</text>
</comment>